<proteinExistence type="inferred from homology"/>
<feature type="chain" id="PRO_0000163005" description="Putative NADPH-dependent 7-cyano-7-deazaguanine reductase">
    <location>
        <begin position="1"/>
        <end position="154"/>
    </location>
</feature>
<feature type="active site" description="Proton donor" evidence="1">
    <location>
        <position position="52"/>
    </location>
</feature>
<feature type="binding site" evidence="1">
    <location>
        <begin position="67"/>
        <end position="69"/>
    </location>
    <ligand>
        <name>substrate</name>
    </ligand>
</feature>
<feature type="binding site" evidence="1">
    <location>
        <begin position="86"/>
        <end position="87"/>
    </location>
    <ligand>
        <name>substrate</name>
    </ligand>
</feature>
<dbReference type="EC" id="1.7.1.13" evidence="1"/>
<dbReference type="EMBL" id="AE005672">
    <property type="protein sequence ID" value="AAK75850.1"/>
    <property type="molecule type" value="Genomic_DNA"/>
</dbReference>
<dbReference type="PIR" id="A95207">
    <property type="entry name" value="A95207"/>
</dbReference>
<dbReference type="SMR" id="Q97P67"/>
<dbReference type="PaxDb" id="170187-SP_1777"/>
<dbReference type="EnsemblBacteria" id="AAK75850">
    <property type="protein sequence ID" value="AAK75850"/>
    <property type="gene ID" value="SP_1777"/>
</dbReference>
<dbReference type="KEGG" id="spn:SP_1777"/>
<dbReference type="eggNOG" id="COG0780">
    <property type="taxonomic scope" value="Bacteria"/>
</dbReference>
<dbReference type="PhylomeDB" id="Q97P67"/>
<dbReference type="BioCyc" id="SPNE170187:G1FZB-1805-MONOMER"/>
<dbReference type="UniPathway" id="UPA00392"/>
<dbReference type="Proteomes" id="UP000000585">
    <property type="component" value="Chromosome"/>
</dbReference>
<dbReference type="GO" id="GO:0005737">
    <property type="term" value="C:cytoplasm"/>
    <property type="evidence" value="ECO:0007669"/>
    <property type="project" value="UniProtKB-SubCell"/>
</dbReference>
<dbReference type="GO" id="GO:0033739">
    <property type="term" value="F:preQ1 synthase activity"/>
    <property type="evidence" value="ECO:0007669"/>
    <property type="project" value="UniProtKB-UniRule"/>
</dbReference>
<dbReference type="GO" id="GO:0008616">
    <property type="term" value="P:queuosine biosynthetic process"/>
    <property type="evidence" value="ECO:0007669"/>
    <property type="project" value="UniProtKB-UniRule"/>
</dbReference>
<dbReference type="GO" id="GO:0006400">
    <property type="term" value="P:tRNA modification"/>
    <property type="evidence" value="ECO:0007669"/>
    <property type="project" value="UniProtKB-UniRule"/>
</dbReference>
<dbReference type="Gene3D" id="3.30.1130.10">
    <property type="match status" value="1"/>
</dbReference>
<dbReference type="HAMAP" id="MF_00818">
    <property type="entry name" value="QueF_type1"/>
    <property type="match status" value="1"/>
</dbReference>
<dbReference type="InterPro" id="IPR043133">
    <property type="entry name" value="GTP-CH-I_C/QueF"/>
</dbReference>
<dbReference type="InterPro" id="IPR050084">
    <property type="entry name" value="NADPH_dep_7-cyano-7-deazaG_red"/>
</dbReference>
<dbReference type="InterPro" id="IPR018317">
    <property type="entry name" value="QueC"/>
</dbReference>
<dbReference type="InterPro" id="IPR029500">
    <property type="entry name" value="QueF"/>
</dbReference>
<dbReference type="InterPro" id="IPR016856">
    <property type="entry name" value="QueF_type1"/>
</dbReference>
<dbReference type="NCBIfam" id="TIGR03139">
    <property type="entry name" value="QueF-II"/>
    <property type="match status" value="1"/>
</dbReference>
<dbReference type="PANTHER" id="PTHR34354">
    <property type="entry name" value="NADPH-DEPENDENT 7-CYANO-7-DEAZAGUANINE REDUCTASE"/>
    <property type="match status" value="1"/>
</dbReference>
<dbReference type="PANTHER" id="PTHR34354:SF1">
    <property type="entry name" value="NADPH-DEPENDENT 7-CYANO-7-DEAZAGUANINE REDUCTASE"/>
    <property type="match status" value="1"/>
</dbReference>
<dbReference type="Pfam" id="PF06508">
    <property type="entry name" value="QueC"/>
    <property type="match status" value="1"/>
</dbReference>
<dbReference type="Pfam" id="PF14489">
    <property type="entry name" value="QueF"/>
    <property type="match status" value="1"/>
</dbReference>
<dbReference type="SUPFAM" id="SSF52402">
    <property type="entry name" value="Adenine nucleotide alpha hydrolases-like"/>
    <property type="match status" value="1"/>
</dbReference>
<dbReference type="SUPFAM" id="SSF55620">
    <property type="entry name" value="Tetrahydrobiopterin biosynthesis enzymes-like"/>
    <property type="match status" value="1"/>
</dbReference>
<accession>Q97P67</accession>
<protein>
    <recommendedName>
        <fullName>Putative NADPH-dependent 7-cyano-7-deazaguanine reductase</fullName>
        <ecNumber evidence="1">1.7.1.13</ecNumber>
    </recommendedName>
    <alternativeName>
        <fullName evidence="1">7-cyano-7-carbaguanine reductase</fullName>
    </alternativeName>
    <alternativeName>
        <fullName evidence="1">NADPH-dependent nitrile oxidoreductase</fullName>
    </alternativeName>
    <alternativeName>
        <fullName evidence="1">PreQ(0) reductase</fullName>
    </alternativeName>
</protein>
<evidence type="ECO:0000255" key="1">
    <source>
        <dbReference type="HAMAP-Rule" id="MF_00818"/>
    </source>
</evidence>
<evidence type="ECO:0000305" key="2"/>
<reference key="1">
    <citation type="journal article" date="2001" name="Science">
        <title>Complete genome sequence of a virulent isolate of Streptococcus pneumoniae.</title>
        <authorList>
            <person name="Tettelin H."/>
            <person name="Nelson K.E."/>
            <person name="Paulsen I.T."/>
            <person name="Eisen J.A."/>
            <person name="Read T.D."/>
            <person name="Peterson S.N."/>
            <person name="Heidelberg J.F."/>
            <person name="DeBoy R.T."/>
            <person name="Haft D.H."/>
            <person name="Dodson R.J."/>
            <person name="Durkin A.S."/>
            <person name="Gwinn M.L."/>
            <person name="Kolonay J.F."/>
            <person name="Nelson W.C."/>
            <person name="Peterson J.D."/>
            <person name="Umayam L.A."/>
            <person name="White O."/>
            <person name="Salzberg S.L."/>
            <person name="Lewis M.R."/>
            <person name="Radune D."/>
            <person name="Holtzapple E.K."/>
            <person name="Khouri H.M."/>
            <person name="Wolf A.M."/>
            <person name="Utterback T.R."/>
            <person name="Hansen C.L."/>
            <person name="McDonald L.A."/>
            <person name="Feldblyum T.V."/>
            <person name="Angiuoli S.V."/>
            <person name="Dickinson T."/>
            <person name="Hickey E.K."/>
            <person name="Holt I.E."/>
            <person name="Loftus B.J."/>
            <person name="Yang F."/>
            <person name="Smith H.O."/>
            <person name="Venter J.C."/>
            <person name="Dougherty B.A."/>
            <person name="Morrison D.A."/>
            <person name="Hollingshead S.K."/>
            <person name="Fraser C.M."/>
        </authorList>
    </citation>
    <scope>NUCLEOTIDE SEQUENCE [LARGE SCALE GENOMIC DNA]</scope>
    <source>
        <strain>ATCC BAA-334 / TIGR4</strain>
    </source>
</reference>
<name>QUEF_STRPN</name>
<sequence length="154" mass="18027">MQHYETVEAVTFAYGQRHHLEIQITREIAKEQGIRHHILDMSLLGQITAQPDFATIHISYIPDKLCVESKSLKLYLFSYRNHGDFHENCINTIGKDLVNLLDPRYLEVWGKFTPRGGISIDPYYNYGKQGTKYEGLAEQRLFQHDLYPEKIDNR</sequence>
<gene>
    <name evidence="1" type="primary">queF</name>
    <name type="ordered locus">SP_1777</name>
</gene>
<keyword id="KW-0963">Cytoplasm</keyword>
<keyword id="KW-0521">NADP</keyword>
<keyword id="KW-0560">Oxidoreductase</keyword>
<keyword id="KW-0671">Queuosine biosynthesis</keyword>
<keyword id="KW-1185">Reference proteome</keyword>
<comment type="function">
    <text evidence="1">Catalyzes the NADPH-dependent reduction of 7-cyano-7-deazaguanine (preQ0) to 7-aminomethyl-7-deazaguanine (preQ1).</text>
</comment>
<comment type="catalytic activity">
    <reaction evidence="1">
        <text>7-aminomethyl-7-carbaguanine + 2 NADP(+) = 7-cyano-7-deazaguanine + 2 NADPH + 3 H(+)</text>
        <dbReference type="Rhea" id="RHEA:13409"/>
        <dbReference type="ChEBI" id="CHEBI:15378"/>
        <dbReference type="ChEBI" id="CHEBI:45075"/>
        <dbReference type="ChEBI" id="CHEBI:57783"/>
        <dbReference type="ChEBI" id="CHEBI:58349"/>
        <dbReference type="ChEBI" id="CHEBI:58703"/>
        <dbReference type="EC" id="1.7.1.13"/>
    </reaction>
</comment>
<comment type="pathway">
    <text evidence="1">tRNA modification; tRNA-queuosine biosynthesis.</text>
</comment>
<comment type="subcellular location">
    <subcellularLocation>
        <location evidence="1">Cytoplasm</location>
    </subcellularLocation>
</comment>
<comment type="similarity">
    <text evidence="1">Belongs to the GTP cyclohydrolase I family. QueF type 1 subfamily.</text>
</comment>
<comment type="caution">
    <text evidence="2">Lacks the conserved cysteine residue that is involved in the formation of the covalent thioimide linkage with the substrate; it is replaced by a glycine residue (Gly-45). The enzyme may thus be inactive.</text>
</comment>
<organism>
    <name type="scientific">Streptococcus pneumoniae serotype 4 (strain ATCC BAA-334 / TIGR4)</name>
    <dbReference type="NCBI Taxonomy" id="170187"/>
    <lineage>
        <taxon>Bacteria</taxon>
        <taxon>Bacillati</taxon>
        <taxon>Bacillota</taxon>
        <taxon>Bacilli</taxon>
        <taxon>Lactobacillales</taxon>
        <taxon>Streptococcaceae</taxon>
        <taxon>Streptococcus</taxon>
    </lineage>
</organism>